<gene>
    <name evidence="1" type="primary">pgi</name>
    <name type="ordered locus">Bind_2735</name>
</gene>
<evidence type="ECO:0000255" key="1">
    <source>
        <dbReference type="HAMAP-Rule" id="MF_00473"/>
    </source>
</evidence>
<organism>
    <name type="scientific">Beijerinckia indica subsp. indica (strain ATCC 9039 / DSM 1715 / NCIMB 8712)</name>
    <dbReference type="NCBI Taxonomy" id="395963"/>
    <lineage>
        <taxon>Bacteria</taxon>
        <taxon>Pseudomonadati</taxon>
        <taxon>Pseudomonadota</taxon>
        <taxon>Alphaproteobacteria</taxon>
        <taxon>Hyphomicrobiales</taxon>
        <taxon>Beijerinckiaceae</taxon>
        <taxon>Beijerinckia</taxon>
    </lineage>
</organism>
<protein>
    <recommendedName>
        <fullName evidence="1">Glucose-6-phosphate isomerase</fullName>
        <shortName evidence="1">GPI</shortName>
        <ecNumber evidence="1">5.3.1.9</ecNumber>
    </recommendedName>
    <alternativeName>
        <fullName evidence="1">Phosphoglucose isomerase</fullName>
        <shortName evidence="1">PGI</shortName>
    </alternativeName>
    <alternativeName>
        <fullName evidence="1">Phosphohexose isomerase</fullName>
        <shortName evidence="1">PHI</shortName>
    </alternativeName>
</protein>
<accession>B2IJT2</accession>
<proteinExistence type="inferred from homology"/>
<keyword id="KW-0963">Cytoplasm</keyword>
<keyword id="KW-0312">Gluconeogenesis</keyword>
<keyword id="KW-0324">Glycolysis</keyword>
<keyword id="KW-0413">Isomerase</keyword>
<keyword id="KW-1185">Reference proteome</keyword>
<dbReference type="EC" id="5.3.1.9" evidence="1"/>
<dbReference type="EMBL" id="CP001016">
    <property type="protein sequence ID" value="ACB96307.1"/>
    <property type="molecule type" value="Genomic_DNA"/>
</dbReference>
<dbReference type="RefSeq" id="WP_012385658.1">
    <property type="nucleotide sequence ID" value="NC_010581.1"/>
</dbReference>
<dbReference type="SMR" id="B2IJT2"/>
<dbReference type="STRING" id="395963.Bind_2735"/>
<dbReference type="KEGG" id="bid:Bind_2735"/>
<dbReference type="eggNOG" id="COG0166">
    <property type="taxonomic scope" value="Bacteria"/>
</dbReference>
<dbReference type="HOGENOM" id="CLU_017947_3_1_5"/>
<dbReference type="OrthoDB" id="140919at2"/>
<dbReference type="UniPathway" id="UPA00109">
    <property type="reaction ID" value="UER00181"/>
</dbReference>
<dbReference type="UniPathway" id="UPA00138"/>
<dbReference type="Proteomes" id="UP000001695">
    <property type="component" value="Chromosome"/>
</dbReference>
<dbReference type="GO" id="GO:0005829">
    <property type="term" value="C:cytosol"/>
    <property type="evidence" value="ECO:0007669"/>
    <property type="project" value="TreeGrafter"/>
</dbReference>
<dbReference type="GO" id="GO:0097367">
    <property type="term" value="F:carbohydrate derivative binding"/>
    <property type="evidence" value="ECO:0007669"/>
    <property type="project" value="InterPro"/>
</dbReference>
<dbReference type="GO" id="GO:0004347">
    <property type="term" value="F:glucose-6-phosphate isomerase activity"/>
    <property type="evidence" value="ECO:0007669"/>
    <property type="project" value="UniProtKB-UniRule"/>
</dbReference>
<dbReference type="GO" id="GO:0048029">
    <property type="term" value="F:monosaccharide binding"/>
    <property type="evidence" value="ECO:0007669"/>
    <property type="project" value="TreeGrafter"/>
</dbReference>
<dbReference type="GO" id="GO:0006094">
    <property type="term" value="P:gluconeogenesis"/>
    <property type="evidence" value="ECO:0007669"/>
    <property type="project" value="UniProtKB-UniRule"/>
</dbReference>
<dbReference type="GO" id="GO:0051156">
    <property type="term" value="P:glucose 6-phosphate metabolic process"/>
    <property type="evidence" value="ECO:0007669"/>
    <property type="project" value="TreeGrafter"/>
</dbReference>
<dbReference type="GO" id="GO:0006096">
    <property type="term" value="P:glycolytic process"/>
    <property type="evidence" value="ECO:0007669"/>
    <property type="project" value="UniProtKB-UniRule"/>
</dbReference>
<dbReference type="CDD" id="cd05015">
    <property type="entry name" value="SIS_PGI_1"/>
    <property type="match status" value="1"/>
</dbReference>
<dbReference type="CDD" id="cd05016">
    <property type="entry name" value="SIS_PGI_2"/>
    <property type="match status" value="1"/>
</dbReference>
<dbReference type="Gene3D" id="1.10.1390.10">
    <property type="match status" value="1"/>
</dbReference>
<dbReference type="Gene3D" id="3.40.50.10490">
    <property type="entry name" value="Glucose-6-phosphate isomerase like protein, domain 1"/>
    <property type="match status" value="2"/>
</dbReference>
<dbReference type="HAMAP" id="MF_00473">
    <property type="entry name" value="G6P_isomerase"/>
    <property type="match status" value="1"/>
</dbReference>
<dbReference type="InterPro" id="IPR001672">
    <property type="entry name" value="G6P_Isomerase"/>
</dbReference>
<dbReference type="InterPro" id="IPR023096">
    <property type="entry name" value="G6P_Isomerase_C"/>
</dbReference>
<dbReference type="InterPro" id="IPR018189">
    <property type="entry name" value="Phosphoglucose_isomerase_CS"/>
</dbReference>
<dbReference type="InterPro" id="IPR046348">
    <property type="entry name" value="SIS_dom_sf"/>
</dbReference>
<dbReference type="InterPro" id="IPR035476">
    <property type="entry name" value="SIS_PGI_1"/>
</dbReference>
<dbReference type="InterPro" id="IPR035482">
    <property type="entry name" value="SIS_PGI_2"/>
</dbReference>
<dbReference type="NCBIfam" id="NF001211">
    <property type="entry name" value="PRK00179.1"/>
    <property type="match status" value="1"/>
</dbReference>
<dbReference type="PANTHER" id="PTHR11469">
    <property type="entry name" value="GLUCOSE-6-PHOSPHATE ISOMERASE"/>
    <property type="match status" value="1"/>
</dbReference>
<dbReference type="PANTHER" id="PTHR11469:SF1">
    <property type="entry name" value="GLUCOSE-6-PHOSPHATE ISOMERASE"/>
    <property type="match status" value="1"/>
</dbReference>
<dbReference type="Pfam" id="PF00342">
    <property type="entry name" value="PGI"/>
    <property type="match status" value="1"/>
</dbReference>
<dbReference type="PRINTS" id="PR00662">
    <property type="entry name" value="G6PISOMERASE"/>
</dbReference>
<dbReference type="SUPFAM" id="SSF53697">
    <property type="entry name" value="SIS domain"/>
    <property type="match status" value="1"/>
</dbReference>
<dbReference type="PROSITE" id="PS00765">
    <property type="entry name" value="P_GLUCOSE_ISOMERASE_1"/>
    <property type="match status" value="1"/>
</dbReference>
<dbReference type="PROSITE" id="PS00174">
    <property type="entry name" value="P_GLUCOSE_ISOMERASE_2"/>
    <property type="match status" value="1"/>
</dbReference>
<dbReference type="PROSITE" id="PS51463">
    <property type="entry name" value="P_GLUCOSE_ISOMERASE_3"/>
    <property type="match status" value="1"/>
</dbReference>
<reference key="1">
    <citation type="journal article" date="2010" name="J. Bacteriol.">
        <title>Complete genome sequence of Beijerinckia indica subsp. indica.</title>
        <authorList>
            <person name="Tamas I."/>
            <person name="Dedysh S.N."/>
            <person name="Liesack W."/>
            <person name="Stott M.B."/>
            <person name="Alam M."/>
            <person name="Murrell J.C."/>
            <person name="Dunfield P.F."/>
        </authorList>
    </citation>
    <scope>NUCLEOTIDE SEQUENCE [LARGE SCALE GENOMIC DNA]</scope>
    <source>
        <strain>ATCC 9039 / DSM 1715 / NCIMB 8712</strain>
    </source>
</reference>
<name>G6PI_BEII9</name>
<feature type="chain" id="PRO_1000206359" description="Glucose-6-phosphate isomerase">
    <location>
        <begin position="1"/>
        <end position="547"/>
    </location>
</feature>
<feature type="active site" description="Proton donor" evidence="1">
    <location>
        <position position="351"/>
    </location>
</feature>
<feature type="active site" evidence="1">
    <location>
        <position position="382"/>
    </location>
</feature>
<feature type="active site" evidence="1">
    <location>
        <position position="510"/>
    </location>
</feature>
<sequence>MNRDEVAKTFAALKAHREASQETIADLFRVDPNRFENFHIKLDDVLFDYSKHRVTRTTLDLLFALARAAGVEDRRSQLFDGAAVNITEHRPALHMALRKLDGAPVLAEGKDVMPEVLAERQKIFTFAEAIRKGTIKAANGERFTDIVNIGIGGSDLGPRMVVTALAPFVADHLTMHFVSNVDGADLGDTLKKLPLATTLFIVCSKTFTTLETMTNAQTAREAVAEKLGEAAVADHFCAVSTQLDKIAAFGIKSDRVFGFWDWVGGRYSVWSAIGLSVVIAIGAEKFEKFLLGGQDIDQHFQTAPLESNVPVIMALLEIWYRDLWDYATRAVIPYDERMHRFSAYLQQLEMESNGKSVQLSGAPVTESTSPVVWGEPGTNGQHAFFQMLHQGTEIVPIDFLVAAQPSGADAKHHQLLVANCLAQSQALMQGRSLEDVKTLLTAQGLDTAAVNTLAPHKVFPGNRPSSTFLYKRLSPRVLGQLIALYEHKVFVEGVIWNVDSFDQWGVELGKELANKLTPIIRDSEASLEGLDGSTAGLIGEIRKHKKG</sequence>
<comment type="function">
    <text evidence="1">Catalyzes the reversible isomerization of glucose-6-phosphate to fructose-6-phosphate.</text>
</comment>
<comment type="catalytic activity">
    <reaction evidence="1">
        <text>alpha-D-glucose 6-phosphate = beta-D-fructose 6-phosphate</text>
        <dbReference type="Rhea" id="RHEA:11816"/>
        <dbReference type="ChEBI" id="CHEBI:57634"/>
        <dbReference type="ChEBI" id="CHEBI:58225"/>
        <dbReference type="EC" id="5.3.1.9"/>
    </reaction>
</comment>
<comment type="pathway">
    <text evidence="1">Carbohydrate biosynthesis; gluconeogenesis.</text>
</comment>
<comment type="pathway">
    <text evidence="1">Carbohydrate degradation; glycolysis; D-glyceraldehyde 3-phosphate and glycerone phosphate from D-glucose: step 2/4.</text>
</comment>
<comment type="subcellular location">
    <subcellularLocation>
        <location evidence="1">Cytoplasm</location>
    </subcellularLocation>
</comment>
<comment type="similarity">
    <text evidence="1">Belongs to the GPI family.</text>
</comment>